<evidence type="ECO:0000255" key="1">
    <source>
        <dbReference type="HAMAP-Rule" id="MF_01031"/>
    </source>
</evidence>
<sequence>MKPFTILNGIAALLDRPNVDTDQIIPKQFLRKIERTGFGVHLFHDWRYLDDAGTKLNPDFSLNQERYKGASILITRDNFGCGSSREHAPWALEDYGFRAIIAPSYADIFFNNCFKNGMLPVILKSEEVEELFHLVSTNVGAKVIVDLDKQTVTGPTGKIYYFEVDSFRKYCLYNGLDDIGLTLKQESKIGEFEKKQKEVEPWLYAI</sequence>
<proteinExistence type="inferred from homology"/>
<accession>Q72RC5</accession>
<organism>
    <name type="scientific">Leptospira interrogans serogroup Icterohaemorrhagiae serovar copenhageni (strain Fiocruz L1-130)</name>
    <dbReference type="NCBI Taxonomy" id="267671"/>
    <lineage>
        <taxon>Bacteria</taxon>
        <taxon>Pseudomonadati</taxon>
        <taxon>Spirochaetota</taxon>
        <taxon>Spirochaetia</taxon>
        <taxon>Leptospirales</taxon>
        <taxon>Leptospiraceae</taxon>
        <taxon>Leptospira</taxon>
    </lineage>
</organism>
<protein>
    <recommendedName>
        <fullName evidence="1">3-isopropylmalate dehydratase small subunit</fullName>
        <ecNumber evidence="1">4.2.1.33</ecNumber>
    </recommendedName>
    <alternativeName>
        <fullName evidence="1">Alpha-IPM isomerase</fullName>
        <shortName evidence="1">IPMI</shortName>
    </alternativeName>
    <alternativeName>
        <fullName evidence="1">Isopropylmalate isomerase</fullName>
    </alternativeName>
</protein>
<reference key="1">
    <citation type="journal article" date="2004" name="J. Bacteriol.">
        <title>Comparative genomics of two Leptospira interrogans serovars reveals novel insights into physiology and pathogenesis.</title>
        <authorList>
            <person name="Nascimento A.L.T.O."/>
            <person name="Ko A.I."/>
            <person name="Martins E.A.L."/>
            <person name="Monteiro-Vitorello C.B."/>
            <person name="Ho P.L."/>
            <person name="Haake D.A."/>
            <person name="Verjovski-Almeida S."/>
            <person name="Hartskeerl R.A."/>
            <person name="Marques M.V."/>
            <person name="Oliveira M.C."/>
            <person name="Menck C.F.M."/>
            <person name="Leite L.C.C."/>
            <person name="Carrer H."/>
            <person name="Coutinho L.L."/>
            <person name="Degrave W.M."/>
            <person name="Dellagostin O.A."/>
            <person name="El-Dorry H."/>
            <person name="Ferro E.S."/>
            <person name="Ferro M.I.T."/>
            <person name="Furlan L.R."/>
            <person name="Gamberini M."/>
            <person name="Giglioti E.A."/>
            <person name="Goes-Neto A."/>
            <person name="Goldman G.H."/>
            <person name="Goldman M.H.S."/>
            <person name="Harakava R."/>
            <person name="Jeronimo S.M.B."/>
            <person name="Junqueira-de-Azevedo I.L.M."/>
            <person name="Kimura E.T."/>
            <person name="Kuramae E.E."/>
            <person name="Lemos E.G.M."/>
            <person name="Lemos M.V.F."/>
            <person name="Marino C.L."/>
            <person name="Nunes L.R."/>
            <person name="de Oliveira R.C."/>
            <person name="Pereira G.G."/>
            <person name="Reis M.S."/>
            <person name="Schriefer A."/>
            <person name="Siqueira W.J."/>
            <person name="Sommer P."/>
            <person name="Tsai S.M."/>
            <person name="Simpson A.J.G."/>
            <person name="Ferro J.A."/>
            <person name="Camargo L.E.A."/>
            <person name="Kitajima J.P."/>
            <person name="Setubal J.C."/>
            <person name="Van Sluys M.A."/>
        </authorList>
    </citation>
    <scope>NUCLEOTIDE SEQUENCE [LARGE SCALE GENOMIC DNA]</scope>
    <source>
        <strain>Fiocruz L1-130</strain>
    </source>
</reference>
<dbReference type="EC" id="4.2.1.33" evidence="1"/>
<dbReference type="EMBL" id="AE016823">
    <property type="protein sequence ID" value="AAS70409.1"/>
    <property type="molecule type" value="Genomic_DNA"/>
</dbReference>
<dbReference type="RefSeq" id="WP_000802156.1">
    <property type="nucleotide sequence ID" value="NC_005823.1"/>
</dbReference>
<dbReference type="SMR" id="Q72RC5"/>
<dbReference type="GeneID" id="61141717"/>
<dbReference type="KEGG" id="lic:LIC_11821"/>
<dbReference type="HOGENOM" id="CLU_081378_0_3_12"/>
<dbReference type="UniPathway" id="UPA00048">
    <property type="reaction ID" value="UER00071"/>
</dbReference>
<dbReference type="Proteomes" id="UP000007037">
    <property type="component" value="Chromosome I"/>
</dbReference>
<dbReference type="GO" id="GO:0009316">
    <property type="term" value="C:3-isopropylmalate dehydratase complex"/>
    <property type="evidence" value="ECO:0007669"/>
    <property type="project" value="InterPro"/>
</dbReference>
<dbReference type="GO" id="GO:0003861">
    <property type="term" value="F:3-isopropylmalate dehydratase activity"/>
    <property type="evidence" value="ECO:0007669"/>
    <property type="project" value="UniProtKB-UniRule"/>
</dbReference>
<dbReference type="GO" id="GO:0009098">
    <property type="term" value="P:L-leucine biosynthetic process"/>
    <property type="evidence" value="ECO:0007669"/>
    <property type="project" value="UniProtKB-UniRule"/>
</dbReference>
<dbReference type="CDD" id="cd01577">
    <property type="entry name" value="IPMI_Swivel"/>
    <property type="match status" value="1"/>
</dbReference>
<dbReference type="FunFam" id="3.20.19.10:FF:000003">
    <property type="entry name" value="3-isopropylmalate dehydratase small subunit"/>
    <property type="match status" value="1"/>
</dbReference>
<dbReference type="Gene3D" id="3.20.19.10">
    <property type="entry name" value="Aconitase, domain 4"/>
    <property type="match status" value="1"/>
</dbReference>
<dbReference type="HAMAP" id="MF_01031">
    <property type="entry name" value="LeuD_type1"/>
    <property type="match status" value="1"/>
</dbReference>
<dbReference type="InterPro" id="IPR004431">
    <property type="entry name" value="3-IsopropMal_deHydase_ssu"/>
</dbReference>
<dbReference type="InterPro" id="IPR015928">
    <property type="entry name" value="Aconitase/3IPM_dehydase_swvl"/>
</dbReference>
<dbReference type="InterPro" id="IPR000573">
    <property type="entry name" value="AconitaseA/IPMdHydase_ssu_swvl"/>
</dbReference>
<dbReference type="InterPro" id="IPR033940">
    <property type="entry name" value="IPMI_Swivel"/>
</dbReference>
<dbReference type="InterPro" id="IPR050075">
    <property type="entry name" value="LeuD"/>
</dbReference>
<dbReference type="NCBIfam" id="TIGR00171">
    <property type="entry name" value="leuD"/>
    <property type="match status" value="1"/>
</dbReference>
<dbReference type="NCBIfam" id="NF002458">
    <property type="entry name" value="PRK01641.1"/>
    <property type="match status" value="1"/>
</dbReference>
<dbReference type="PANTHER" id="PTHR43345:SF5">
    <property type="entry name" value="3-ISOPROPYLMALATE DEHYDRATASE SMALL SUBUNIT"/>
    <property type="match status" value="1"/>
</dbReference>
<dbReference type="PANTHER" id="PTHR43345">
    <property type="entry name" value="3-ISOPROPYLMALATE DEHYDRATASE SMALL SUBUNIT 2-RELATED-RELATED"/>
    <property type="match status" value="1"/>
</dbReference>
<dbReference type="Pfam" id="PF00694">
    <property type="entry name" value="Aconitase_C"/>
    <property type="match status" value="1"/>
</dbReference>
<dbReference type="SUPFAM" id="SSF52016">
    <property type="entry name" value="LeuD/IlvD-like"/>
    <property type="match status" value="1"/>
</dbReference>
<keyword id="KW-0028">Amino-acid biosynthesis</keyword>
<keyword id="KW-0100">Branched-chain amino acid biosynthesis</keyword>
<keyword id="KW-0432">Leucine biosynthesis</keyword>
<keyword id="KW-0456">Lyase</keyword>
<name>LEUD_LEPIC</name>
<comment type="function">
    <text evidence="1">Catalyzes the isomerization between 2-isopropylmalate and 3-isopropylmalate, via the formation of 2-isopropylmaleate.</text>
</comment>
<comment type="catalytic activity">
    <reaction evidence="1">
        <text>(2R,3S)-3-isopropylmalate = (2S)-2-isopropylmalate</text>
        <dbReference type="Rhea" id="RHEA:32287"/>
        <dbReference type="ChEBI" id="CHEBI:1178"/>
        <dbReference type="ChEBI" id="CHEBI:35121"/>
        <dbReference type="EC" id="4.2.1.33"/>
    </reaction>
</comment>
<comment type="pathway">
    <text evidence="1">Amino-acid biosynthesis; L-leucine biosynthesis; L-leucine from 3-methyl-2-oxobutanoate: step 2/4.</text>
</comment>
<comment type="subunit">
    <text evidence="1">Heterodimer of LeuC and LeuD.</text>
</comment>
<comment type="similarity">
    <text evidence="1">Belongs to the LeuD family. LeuD type 1 subfamily.</text>
</comment>
<feature type="chain" id="PRO_0000141829" description="3-isopropylmalate dehydratase small subunit">
    <location>
        <begin position="1"/>
        <end position="206"/>
    </location>
</feature>
<gene>
    <name evidence="1" type="primary">leuD</name>
    <name type="ordered locus">LIC_11821</name>
</gene>